<protein>
    <recommendedName>
        <fullName>Regulatory protein RecX</fullName>
    </recommendedName>
</protein>
<keyword id="KW-0963">Cytoplasm</keyword>
<keyword id="KW-1185">Reference proteome</keyword>
<dbReference type="EMBL" id="AE007870">
    <property type="protein sequence ID" value="AAK89399.2"/>
    <property type="status" value="ALT_INIT"/>
    <property type="molecule type" value="Genomic_DNA"/>
</dbReference>
<dbReference type="PIR" id="AG3051">
    <property type="entry name" value="AG3051"/>
</dbReference>
<dbReference type="PIR" id="E98234">
    <property type="entry name" value="E98234"/>
</dbReference>
<dbReference type="RefSeq" id="NP_356614.2">
    <property type="nucleotide sequence ID" value="NC_003063.2"/>
</dbReference>
<dbReference type="SMR" id="Q8U8R2"/>
<dbReference type="STRING" id="176299.Atu4028"/>
<dbReference type="EnsemblBacteria" id="AAK89399">
    <property type="protein sequence ID" value="AAK89399"/>
    <property type="gene ID" value="Atu4028"/>
</dbReference>
<dbReference type="KEGG" id="atu:Atu4028"/>
<dbReference type="PATRIC" id="fig|176299.10.peg.3846"/>
<dbReference type="eggNOG" id="COG2137">
    <property type="taxonomic scope" value="Bacteria"/>
</dbReference>
<dbReference type="HOGENOM" id="CLU_090972_3_0_5"/>
<dbReference type="OrthoDB" id="8277672at2"/>
<dbReference type="BioCyc" id="AGRO:ATU4028-MONOMER"/>
<dbReference type="Proteomes" id="UP000000813">
    <property type="component" value="Chromosome linear"/>
</dbReference>
<dbReference type="GO" id="GO:0005737">
    <property type="term" value="C:cytoplasm"/>
    <property type="evidence" value="ECO:0007669"/>
    <property type="project" value="UniProtKB-SubCell"/>
</dbReference>
<dbReference type="GO" id="GO:0006282">
    <property type="term" value="P:regulation of DNA repair"/>
    <property type="evidence" value="ECO:0007669"/>
    <property type="project" value="UniProtKB-UniRule"/>
</dbReference>
<dbReference type="Gene3D" id="1.10.10.10">
    <property type="entry name" value="Winged helix-like DNA-binding domain superfamily/Winged helix DNA-binding domain"/>
    <property type="match status" value="1"/>
</dbReference>
<dbReference type="HAMAP" id="MF_01114">
    <property type="entry name" value="RecX"/>
    <property type="match status" value="1"/>
</dbReference>
<dbReference type="InterPro" id="IPR053924">
    <property type="entry name" value="RecX_HTH_2nd"/>
</dbReference>
<dbReference type="InterPro" id="IPR003783">
    <property type="entry name" value="Regulatory_RecX"/>
</dbReference>
<dbReference type="InterPro" id="IPR036388">
    <property type="entry name" value="WH-like_DNA-bd_sf"/>
</dbReference>
<dbReference type="NCBIfam" id="NF001060">
    <property type="entry name" value="PRK00117.4-4"/>
    <property type="match status" value="1"/>
</dbReference>
<dbReference type="Pfam" id="PF02631">
    <property type="entry name" value="RecX_HTH2"/>
    <property type="match status" value="1"/>
</dbReference>
<gene>
    <name type="primary">recX</name>
    <name type="ordered locus">Atu4028</name>
    <name type="ORF">AGR_L_1649</name>
</gene>
<reference key="1">
    <citation type="journal article" date="2001" name="Science">
        <title>The genome of the natural genetic engineer Agrobacterium tumefaciens C58.</title>
        <authorList>
            <person name="Wood D.W."/>
            <person name="Setubal J.C."/>
            <person name="Kaul R."/>
            <person name="Monks D.E."/>
            <person name="Kitajima J.P."/>
            <person name="Okura V.K."/>
            <person name="Zhou Y."/>
            <person name="Chen L."/>
            <person name="Wood G.E."/>
            <person name="Almeida N.F. Jr."/>
            <person name="Woo L."/>
            <person name="Chen Y."/>
            <person name="Paulsen I.T."/>
            <person name="Eisen J.A."/>
            <person name="Karp P.D."/>
            <person name="Bovee D. Sr."/>
            <person name="Chapman P."/>
            <person name="Clendenning J."/>
            <person name="Deatherage G."/>
            <person name="Gillet W."/>
            <person name="Grant C."/>
            <person name="Kutyavin T."/>
            <person name="Levy R."/>
            <person name="Li M.-J."/>
            <person name="McClelland E."/>
            <person name="Palmieri A."/>
            <person name="Raymond C."/>
            <person name="Rouse G."/>
            <person name="Saenphimmachak C."/>
            <person name="Wu Z."/>
            <person name="Romero P."/>
            <person name="Gordon D."/>
            <person name="Zhang S."/>
            <person name="Yoo H."/>
            <person name="Tao Y."/>
            <person name="Biddle P."/>
            <person name="Jung M."/>
            <person name="Krespan W."/>
            <person name="Perry M."/>
            <person name="Gordon-Kamm B."/>
            <person name="Liao L."/>
            <person name="Kim S."/>
            <person name="Hendrick C."/>
            <person name="Zhao Z.-Y."/>
            <person name="Dolan M."/>
            <person name="Chumley F."/>
            <person name="Tingey S.V."/>
            <person name="Tomb J.-F."/>
            <person name="Gordon M.P."/>
            <person name="Olson M.V."/>
            <person name="Nester E.W."/>
        </authorList>
    </citation>
    <scope>NUCLEOTIDE SEQUENCE [LARGE SCALE GENOMIC DNA]</scope>
    <source>
        <strain>C58 / ATCC 33970</strain>
    </source>
</reference>
<reference key="2">
    <citation type="journal article" date="2001" name="Science">
        <title>Genome sequence of the plant pathogen and biotechnology agent Agrobacterium tumefaciens C58.</title>
        <authorList>
            <person name="Goodner B."/>
            <person name="Hinkle G."/>
            <person name="Gattung S."/>
            <person name="Miller N."/>
            <person name="Blanchard M."/>
            <person name="Qurollo B."/>
            <person name="Goldman B.S."/>
            <person name="Cao Y."/>
            <person name="Askenazi M."/>
            <person name="Halling C."/>
            <person name="Mullin L."/>
            <person name="Houmiel K."/>
            <person name="Gordon J."/>
            <person name="Vaudin M."/>
            <person name="Iartchouk O."/>
            <person name="Epp A."/>
            <person name="Liu F."/>
            <person name="Wollam C."/>
            <person name="Allinger M."/>
            <person name="Doughty D."/>
            <person name="Scott C."/>
            <person name="Lappas C."/>
            <person name="Markelz B."/>
            <person name="Flanagan C."/>
            <person name="Crowell C."/>
            <person name="Gurson J."/>
            <person name="Lomo C."/>
            <person name="Sear C."/>
            <person name="Strub G."/>
            <person name="Cielo C."/>
            <person name="Slater S."/>
        </authorList>
    </citation>
    <scope>NUCLEOTIDE SEQUENCE [LARGE SCALE GENOMIC DNA]</scope>
    <source>
        <strain>C58 / ATCC 33970</strain>
    </source>
</reference>
<feature type="chain" id="PRO_0000162411" description="Regulatory protein RecX">
    <location>
        <begin position="1"/>
        <end position="184"/>
    </location>
</feature>
<sequence length="184" mass="20547">MEFDGEAQAVEPTSRMLSWARNSALYRLQQRMMTEKQLRDAIMRKAREKFEDIGPAQVKALGEFAVTFAYGIKALDDTAYAEITVRSGQRSGKSKRGLAQKLQIKGVARETATAALQETNDLVAAVIFARKRAFGPYRRVEPDEKRKAKEFSAFARNGFSFEIGAKVMAMTTEEAEDILSDAPL</sequence>
<evidence type="ECO:0000250" key="1"/>
<evidence type="ECO:0000305" key="2"/>
<name>RECX_AGRFC</name>
<comment type="function">
    <text evidence="1">Modulates RecA activity.</text>
</comment>
<comment type="subcellular location">
    <subcellularLocation>
        <location evidence="2">Cytoplasm</location>
    </subcellularLocation>
</comment>
<comment type="similarity">
    <text evidence="2">Belongs to the RecX family.</text>
</comment>
<comment type="sequence caution" evidence="2">
    <conflict type="erroneous initiation">
        <sequence resource="EMBL-CDS" id="AAK89399"/>
    </conflict>
</comment>
<accession>Q8U8R2</accession>
<proteinExistence type="inferred from homology"/>
<organism>
    <name type="scientific">Agrobacterium fabrum (strain C58 / ATCC 33970)</name>
    <name type="common">Agrobacterium tumefaciens (strain C58)</name>
    <dbReference type="NCBI Taxonomy" id="176299"/>
    <lineage>
        <taxon>Bacteria</taxon>
        <taxon>Pseudomonadati</taxon>
        <taxon>Pseudomonadota</taxon>
        <taxon>Alphaproteobacteria</taxon>
        <taxon>Hyphomicrobiales</taxon>
        <taxon>Rhizobiaceae</taxon>
        <taxon>Rhizobium/Agrobacterium group</taxon>
        <taxon>Agrobacterium</taxon>
        <taxon>Agrobacterium tumefaciens complex</taxon>
    </lineage>
</organism>